<gene>
    <name evidence="2" type="primary">AQP2</name>
</gene>
<feature type="chain" id="PRO_0000063938" description="Aquaporin-2">
    <location>
        <begin position="1" status="less than"/>
        <end position="109" status="greater than"/>
    </location>
</feature>
<feature type="topological domain" description="Cytoplasmic" evidence="4">
    <location>
        <begin position="1" status="less than"/>
        <end position="6"/>
    </location>
</feature>
<feature type="transmembrane region" description="Helical" evidence="2">
    <location>
        <begin position="7"/>
        <end position="27"/>
    </location>
</feature>
<feature type="topological domain" description="Extracellular" evidence="4">
    <location>
        <begin position="28"/>
        <end position="35"/>
    </location>
</feature>
<feature type="transmembrane region" description="Helical" evidence="2">
    <location>
        <begin position="36"/>
        <end position="54"/>
    </location>
</feature>
<feature type="topological domain" description="Cytoplasmic" evidence="4">
    <location>
        <begin position="55"/>
        <end position="59"/>
    </location>
</feature>
<feature type="intramembrane region" description="Discontinuously helical" evidence="2">
    <location>
        <begin position="60"/>
        <end position="69"/>
    </location>
</feature>
<feature type="topological domain" description="Cytoplasmic" evidence="4">
    <location>
        <begin position="70"/>
        <end position="80"/>
    </location>
</feature>
<feature type="transmembrane region" description="Helical" evidence="2">
    <location>
        <begin position="81"/>
        <end position="102"/>
    </location>
</feature>
<feature type="topological domain" description="Extracellular" evidence="4">
    <location>
        <begin position="103"/>
        <end position="109" status="greater than"/>
    </location>
</feature>
<feature type="short sequence motif" description="NPA 1" evidence="2">
    <location>
        <begin position="63"/>
        <end position="65"/>
    </location>
</feature>
<feature type="non-terminal residue">
    <location>
        <position position="1"/>
    </location>
</feature>
<feature type="non-terminal residue">
    <location>
        <position position="109"/>
    </location>
</feature>
<sequence>SIAFSRAVLSEFLATLLFVFFGLGSALNWPQALPSVLQIAMAFGLAIGTLVQTLGHISGAHINPAVTIACLVGCHVSFLRALFYLAAQLLGAVAGAALLHELTPPDIRG</sequence>
<keyword id="KW-1003">Cell membrane</keyword>
<keyword id="KW-0968">Cytoplasmic vesicle</keyword>
<keyword id="KW-0325">Glycoprotein</keyword>
<keyword id="KW-0333">Golgi apparatus</keyword>
<keyword id="KW-0472">Membrane</keyword>
<keyword id="KW-0597">Phosphoprotein</keyword>
<keyword id="KW-0812">Transmembrane</keyword>
<keyword id="KW-1133">Transmembrane helix</keyword>
<keyword id="KW-0813">Transport</keyword>
<organism>
    <name type="scientific">Procavia capensis habessinica</name>
    <name type="common">Abyssinian hyrax</name>
    <dbReference type="NCBI Taxonomy" id="9814"/>
    <lineage>
        <taxon>Eukaryota</taxon>
        <taxon>Metazoa</taxon>
        <taxon>Chordata</taxon>
        <taxon>Craniata</taxon>
        <taxon>Vertebrata</taxon>
        <taxon>Euteleostomi</taxon>
        <taxon>Mammalia</taxon>
        <taxon>Eutheria</taxon>
        <taxon>Afrotheria</taxon>
        <taxon>Hyracoidea</taxon>
        <taxon>Procaviidae</taxon>
        <taxon>Procavia</taxon>
    </lineage>
</organism>
<protein>
    <recommendedName>
        <fullName evidence="3">Aquaporin-2</fullName>
        <shortName>AQP-2</shortName>
    </recommendedName>
    <alternativeName>
        <fullName>ADH water channel</fullName>
    </alternativeName>
    <alternativeName>
        <fullName>Aquaporin-CD</fullName>
        <shortName>AQP-CD</shortName>
    </alternativeName>
    <alternativeName>
        <fullName>Collecting duct water channel protein</fullName>
    </alternativeName>
    <alternativeName>
        <fullName>WCH-CD</fullName>
    </alternativeName>
    <alternativeName>
        <fullName>Water channel protein for renal collecting duct</fullName>
    </alternativeName>
</protein>
<comment type="function">
    <text evidence="2">Forms a water-specific channel that provides the plasma membranes of renal collecting duct with high permeability to water, thereby permitting water to move in the direction of an osmotic gradient. Plays an essential role in renal water homeostasis. Could also be permeable to glycerol.</text>
</comment>
<comment type="catalytic activity">
    <reaction evidence="2">
        <text>H2O(in) = H2O(out)</text>
        <dbReference type="Rhea" id="RHEA:29667"/>
        <dbReference type="ChEBI" id="CHEBI:15377"/>
    </reaction>
</comment>
<comment type="catalytic activity">
    <reaction evidence="2">
        <text>glycerol(in) = glycerol(out)</text>
        <dbReference type="Rhea" id="RHEA:29675"/>
        <dbReference type="ChEBI" id="CHEBI:17754"/>
    </reaction>
</comment>
<comment type="subunit">
    <text evidence="2">Homotetramer.</text>
</comment>
<comment type="subcellular location">
    <subcellularLocation>
        <location evidence="2">Apical cell membrane</location>
        <topology evidence="2">Multi-pass membrane protein</topology>
    </subcellularLocation>
    <subcellularLocation>
        <location evidence="1">Basolateral cell membrane</location>
        <topology evidence="2">Multi-pass membrane protein</topology>
    </subcellularLocation>
    <subcellularLocation>
        <location evidence="2">Cell membrane</location>
        <topology evidence="2">Multi-pass membrane protein</topology>
    </subcellularLocation>
    <subcellularLocation>
        <location evidence="2">Cytoplasmic vesicle membrane</location>
        <topology evidence="2">Multi-pass membrane protein</topology>
    </subcellularLocation>
    <subcellularLocation>
        <location evidence="2">Golgi apparatus</location>
        <location evidence="2">trans-Golgi network membrane</location>
        <topology evidence="2">Multi-pass membrane protein</topology>
    </subcellularLocation>
    <text evidence="2">Shuttles from vesicles to the apical membrane. Vasopressin-regulated phosphorylation is required for translocation to the apical cell membrane. PLEKHA8/FAPP2 is required to transport AQP2 from the TGN to sites where AQP2 is phosphorylated.</text>
</comment>
<comment type="domain">
    <text evidence="2">Aquaporins contain two tandem repeats each containing three membrane-spanning domains and a pore-forming loop with the signature motif Asn-Pro-Ala (NPA).</text>
</comment>
<comment type="PTM">
    <text evidence="2">Serine phosphorylation is necessary and sufficient for expression at the apical membrane. Endocytosis is not phosphorylation-dependent.</text>
</comment>
<comment type="PTM">
    <text evidence="2">N-glycosylated.</text>
</comment>
<comment type="similarity">
    <text evidence="4">Belongs to the MIP/aquaporin (TC 1.A.8) family.</text>
</comment>
<reference key="1">
    <citation type="journal article" date="1997" name="Mol. Biol. Evol.">
        <title>Molecular evolution of mammalian aquaporin-2: further evidence that elephant shrew and aardvark join the paenungulate clade.</title>
        <authorList>
            <person name="Madsen O.J."/>
            <person name="Deen P.M.T."/>
            <person name="Pesole G."/>
            <person name="Saccone C."/>
            <person name="de Jong W.W."/>
        </authorList>
    </citation>
    <scope>NUCLEOTIDE SEQUENCE [GENOMIC DNA]</scope>
</reference>
<name>AQP2_PROHA</name>
<proteinExistence type="inferred from homology"/>
<evidence type="ECO:0000250" key="1">
    <source>
        <dbReference type="UniProtKB" id="P34080"/>
    </source>
</evidence>
<evidence type="ECO:0000250" key="2">
    <source>
        <dbReference type="UniProtKB" id="P41181"/>
    </source>
</evidence>
<evidence type="ECO:0000303" key="3">
    <source>
    </source>
</evidence>
<evidence type="ECO:0000305" key="4"/>
<accession>P79229</accession>
<dbReference type="EMBL" id="Y10631">
    <property type="protein sequence ID" value="CAA71656.1"/>
    <property type="molecule type" value="Genomic_DNA"/>
</dbReference>
<dbReference type="SMR" id="P79229"/>
<dbReference type="GO" id="GO:0016324">
    <property type="term" value="C:apical plasma membrane"/>
    <property type="evidence" value="ECO:0000250"/>
    <property type="project" value="UniProtKB"/>
</dbReference>
<dbReference type="GO" id="GO:0016323">
    <property type="term" value="C:basolateral plasma membrane"/>
    <property type="evidence" value="ECO:0007669"/>
    <property type="project" value="UniProtKB-SubCell"/>
</dbReference>
<dbReference type="GO" id="GO:0030659">
    <property type="term" value="C:cytoplasmic vesicle membrane"/>
    <property type="evidence" value="ECO:0007669"/>
    <property type="project" value="UniProtKB-SubCell"/>
</dbReference>
<dbReference type="GO" id="GO:0005794">
    <property type="term" value="C:Golgi apparatus"/>
    <property type="evidence" value="ECO:0007669"/>
    <property type="project" value="UniProtKB-SubCell"/>
</dbReference>
<dbReference type="GO" id="GO:0005886">
    <property type="term" value="C:plasma membrane"/>
    <property type="evidence" value="ECO:0000250"/>
    <property type="project" value="UniProtKB"/>
</dbReference>
<dbReference type="GO" id="GO:0015250">
    <property type="term" value="F:water channel activity"/>
    <property type="evidence" value="ECO:0000250"/>
    <property type="project" value="UniProtKB"/>
</dbReference>
<dbReference type="GO" id="GO:0051289">
    <property type="term" value="P:protein homotetramerization"/>
    <property type="evidence" value="ECO:0000250"/>
    <property type="project" value="UniProtKB"/>
</dbReference>
<dbReference type="GO" id="GO:0006833">
    <property type="term" value="P:water transport"/>
    <property type="evidence" value="ECO:0000250"/>
    <property type="project" value="UniProtKB"/>
</dbReference>
<dbReference type="FunFam" id="1.20.1080.10:FF:000032">
    <property type="entry name" value="Aquaporin-2"/>
    <property type="match status" value="1"/>
</dbReference>
<dbReference type="Gene3D" id="1.20.1080.10">
    <property type="entry name" value="Glycerol uptake facilitator protein"/>
    <property type="match status" value="1"/>
</dbReference>
<dbReference type="InterPro" id="IPR023271">
    <property type="entry name" value="Aquaporin-like"/>
</dbReference>
<dbReference type="InterPro" id="IPR034294">
    <property type="entry name" value="Aquaporin_transptr"/>
</dbReference>
<dbReference type="InterPro" id="IPR000425">
    <property type="entry name" value="MIP"/>
</dbReference>
<dbReference type="InterPro" id="IPR022357">
    <property type="entry name" value="MIP_CS"/>
</dbReference>
<dbReference type="PANTHER" id="PTHR19139">
    <property type="entry name" value="AQUAPORIN TRANSPORTER"/>
    <property type="match status" value="1"/>
</dbReference>
<dbReference type="PANTHER" id="PTHR19139:SF45">
    <property type="entry name" value="AQUAPORIN-2"/>
    <property type="match status" value="1"/>
</dbReference>
<dbReference type="Pfam" id="PF00230">
    <property type="entry name" value="MIP"/>
    <property type="match status" value="1"/>
</dbReference>
<dbReference type="PRINTS" id="PR02014">
    <property type="entry name" value="AQUAPORIN2"/>
</dbReference>
<dbReference type="PRINTS" id="PR00783">
    <property type="entry name" value="MINTRINSICP"/>
</dbReference>
<dbReference type="SUPFAM" id="SSF81338">
    <property type="entry name" value="Aquaporin-like"/>
    <property type="match status" value="1"/>
</dbReference>
<dbReference type="PROSITE" id="PS00221">
    <property type="entry name" value="MIP"/>
    <property type="match status" value="1"/>
</dbReference>